<reference key="1">
    <citation type="journal article" date="2008" name="J. Bacteriol.">
        <title>The pangenome structure of Escherichia coli: comparative genomic analysis of E. coli commensal and pathogenic isolates.</title>
        <authorList>
            <person name="Rasko D.A."/>
            <person name="Rosovitz M.J."/>
            <person name="Myers G.S.A."/>
            <person name="Mongodin E.F."/>
            <person name="Fricke W.F."/>
            <person name="Gajer P."/>
            <person name="Crabtree J."/>
            <person name="Sebaihia M."/>
            <person name="Thomson N.R."/>
            <person name="Chaudhuri R."/>
            <person name="Henderson I.R."/>
            <person name="Sperandio V."/>
            <person name="Ravel J."/>
        </authorList>
    </citation>
    <scope>NUCLEOTIDE SEQUENCE [LARGE SCALE GENOMIC DNA]</scope>
    <source>
        <strain>HS</strain>
    </source>
</reference>
<accession>A8A2C5</accession>
<dbReference type="EMBL" id="CP000802">
    <property type="protein sequence ID" value="ABV06679.1"/>
    <property type="molecule type" value="Genomic_DNA"/>
</dbReference>
<dbReference type="RefSeq" id="WP_000638031.1">
    <property type="nucleotide sequence ID" value="NC_009800.1"/>
</dbReference>
<dbReference type="SMR" id="A8A2C5"/>
<dbReference type="GeneID" id="93774916"/>
<dbReference type="KEGG" id="ecx:EcHS_A2403"/>
<dbReference type="HOGENOM" id="CLU_131462_5_1_6"/>
<dbReference type="UniPathway" id="UPA00030"/>
<dbReference type="GO" id="GO:0005886">
    <property type="term" value="C:plasma membrane"/>
    <property type="evidence" value="ECO:0007669"/>
    <property type="project" value="UniProtKB-SubCell"/>
</dbReference>
<dbReference type="GO" id="GO:1901505">
    <property type="term" value="F:carbohydrate derivative transmembrane transporter activity"/>
    <property type="evidence" value="ECO:0007669"/>
    <property type="project" value="InterPro"/>
</dbReference>
<dbReference type="GO" id="GO:0009245">
    <property type="term" value="P:lipid A biosynthetic process"/>
    <property type="evidence" value="ECO:0007669"/>
    <property type="project" value="UniProtKB-UniRule"/>
</dbReference>
<dbReference type="GO" id="GO:0009103">
    <property type="term" value="P:lipopolysaccharide biosynthetic process"/>
    <property type="evidence" value="ECO:0007669"/>
    <property type="project" value="UniProtKB-UniRule"/>
</dbReference>
<dbReference type="FunFam" id="1.10.3730.20:FF:000002">
    <property type="entry name" value="Probable 4-amino-4-deoxy-L-arabinose-phosphoundecaprenol flippase subunit ArnE"/>
    <property type="match status" value="1"/>
</dbReference>
<dbReference type="Gene3D" id="1.10.3730.20">
    <property type="match status" value="1"/>
</dbReference>
<dbReference type="HAMAP" id="MF_01869">
    <property type="entry name" value="Flippase_ArnE"/>
    <property type="match status" value="1"/>
</dbReference>
<dbReference type="InterPro" id="IPR000620">
    <property type="entry name" value="EamA_dom"/>
</dbReference>
<dbReference type="InterPro" id="IPR022883">
    <property type="entry name" value="Flippase_ArnE"/>
</dbReference>
<dbReference type="InterPro" id="IPR000390">
    <property type="entry name" value="Small_drug/metabolite_transptr"/>
</dbReference>
<dbReference type="NCBIfam" id="NF011625">
    <property type="entry name" value="PRK15051.1"/>
    <property type="match status" value="1"/>
</dbReference>
<dbReference type="PANTHER" id="PTHR30561:SF23">
    <property type="entry name" value="4-AMINO-4-DEOXY-L-ARABINOSE-PHOSPHOUNDECAPRENOL FLIPPASE SUBUNIT ARNE-RELATED"/>
    <property type="match status" value="1"/>
</dbReference>
<dbReference type="PANTHER" id="PTHR30561">
    <property type="entry name" value="SMR FAMILY PROTON-DEPENDENT DRUG EFFLUX TRANSPORTER SUGE"/>
    <property type="match status" value="1"/>
</dbReference>
<dbReference type="Pfam" id="PF00892">
    <property type="entry name" value="EamA"/>
    <property type="match status" value="1"/>
</dbReference>
<dbReference type="SUPFAM" id="SSF103481">
    <property type="entry name" value="Multidrug resistance efflux transporter EmrE"/>
    <property type="match status" value="1"/>
</dbReference>
<sequence>MIWLTLVFASLLSVAGQLCQKQATCFVAINKRRKHIVLWLGLALACLGLAMVLWLLVLQNVPVGIAYPMLSLNFVWVTLAAVKLWHEPVSPRHWCGVAFIIGGIVILGSTV</sequence>
<proteinExistence type="inferred from homology"/>
<name>ARNE_ECOHS</name>
<evidence type="ECO:0000255" key="1"/>
<evidence type="ECO:0000255" key="2">
    <source>
        <dbReference type="HAMAP-Rule" id="MF_01869"/>
    </source>
</evidence>
<organism>
    <name type="scientific">Escherichia coli O9:H4 (strain HS)</name>
    <dbReference type="NCBI Taxonomy" id="331112"/>
    <lineage>
        <taxon>Bacteria</taxon>
        <taxon>Pseudomonadati</taxon>
        <taxon>Pseudomonadota</taxon>
        <taxon>Gammaproteobacteria</taxon>
        <taxon>Enterobacterales</taxon>
        <taxon>Enterobacteriaceae</taxon>
        <taxon>Escherichia</taxon>
    </lineage>
</organism>
<feature type="chain" id="PRO_0000382974" description="Probable 4-amino-4-deoxy-L-arabinose-phosphoundecaprenol flippase subunit ArnE">
    <location>
        <begin position="1"/>
        <end position="111"/>
    </location>
</feature>
<feature type="topological domain" description="Cytoplasmic" evidence="1">
    <location>
        <begin position="1"/>
        <end position="35"/>
    </location>
</feature>
<feature type="transmembrane region" description="Helical" evidence="2">
    <location>
        <begin position="36"/>
        <end position="56"/>
    </location>
</feature>
<feature type="topological domain" description="Periplasmic" evidence="1">
    <location>
        <begin position="57"/>
        <end position="60"/>
    </location>
</feature>
<feature type="transmembrane region" description="Helical" evidence="2">
    <location>
        <begin position="61"/>
        <end position="81"/>
    </location>
</feature>
<feature type="topological domain" description="Cytoplasmic" evidence="1">
    <location>
        <begin position="82"/>
        <end position="87"/>
    </location>
</feature>
<feature type="transmembrane region" description="Helical" evidence="2">
    <location>
        <begin position="88"/>
        <end position="108"/>
    </location>
</feature>
<feature type="topological domain" description="Periplasmic" evidence="1">
    <location>
        <begin position="109"/>
        <end position="111"/>
    </location>
</feature>
<feature type="domain" description="EamA" evidence="2">
    <location>
        <begin position="40"/>
        <end position="109"/>
    </location>
</feature>
<keyword id="KW-0997">Cell inner membrane</keyword>
<keyword id="KW-1003">Cell membrane</keyword>
<keyword id="KW-0441">Lipid A biosynthesis</keyword>
<keyword id="KW-0444">Lipid biosynthesis</keyword>
<keyword id="KW-0443">Lipid metabolism</keyword>
<keyword id="KW-0448">Lipopolysaccharide biosynthesis</keyword>
<keyword id="KW-0472">Membrane</keyword>
<keyword id="KW-0812">Transmembrane</keyword>
<keyword id="KW-1133">Transmembrane helix</keyword>
<keyword id="KW-0813">Transport</keyword>
<gene>
    <name evidence="2" type="primary">arnE</name>
    <name type="ordered locus">EcHS_A2403</name>
</gene>
<comment type="function">
    <text evidence="2">Translocates 4-amino-4-deoxy-L-arabinose-phosphoundecaprenol (alpha-L-Ara4N-phosphoundecaprenol) from the cytoplasmic to the periplasmic side of the inner membrane.</text>
</comment>
<comment type="pathway">
    <text evidence="2">Bacterial outer membrane biogenesis; lipopolysaccharide biosynthesis.</text>
</comment>
<comment type="subunit">
    <text evidence="2">Heterodimer of ArnE and ArnF.</text>
</comment>
<comment type="subcellular location">
    <subcellularLocation>
        <location evidence="2">Cell inner membrane</location>
        <topology evidence="2">Multi-pass membrane protein</topology>
    </subcellularLocation>
</comment>
<comment type="similarity">
    <text evidence="2">Belongs to the ArnE family.</text>
</comment>
<protein>
    <recommendedName>
        <fullName evidence="2">Probable 4-amino-4-deoxy-L-arabinose-phosphoundecaprenol flippase subunit ArnE</fullName>
        <shortName evidence="2">L-Ara4N-phosphoundecaprenol flippase subunit ArnE</shortName>
    </recommendedName>
    <alternativeName>
        <fullName evidence="2">Undecaprenyl phosphate-aminoarabinose flippase subunit ArnE</fullName>
    </alternativeName>
</protein>